<dbReference type="EMBL" id="DQ887677">
    <property type="protein sequence ID" value="ABI14492.1"/>
    <property type="molecule type" value="Genomic_DNA"/>
</dbReference>
<dbReference type="RefSeq" id="YP_784493.1">
    <property type="nucleotide sequence ID" value="NC_008457.1"/>
</dbReference>
<dbReference type="SMR" id="Q06GP0"/>
<dbReference type="GeneID" id="4363757"/>
<dbReference type="GO" id="GO:0009535">
    <property type="term" value="C:chloroplast thylakoid membrane"/>
    <property type="evidence" value="ECO:0007669"/>
    <property type="project" value="UniProtKB-SubCell"/>
</dbReference>
<dbReference type="GO" id="GO:0009522">
    <property type="term" value="C:photosystem I"/>
    <property type="evidence" value="ECO:0007669"/>
    <property type="project" value="UniProtKB-KW"/>
</dbReference>
<dbReference type="GO" id="GO:0015979">
    <property type="term" value="P:photosynthesis"/>
    <property type="evidence" value="ECO:0007669"/>
    <property type="project" value="UniProtKB-UniRule"/>
</dbReference>
<dbReference type="FunFam" id="1.20.5.510:FF:000001">
    <property type="entry name" value="Photosystem I reaction center subunit IX"/>
    <property type="match status" value="1"/>
</dbReference>
<dbReference type="Gene3D" id="1.20.5.510">
    <property type="entry name" value="Single helix bin"/>
    <property type="match status" value="1"/>
</dbReference>
<dbReference type="HAMAP" id="MF_00522">
    <property type="entry name" value="PSI_PsaJ"/>
    <property type="match status" value="1"/>
</dbReference>
<dbReference type="InterPro" id="IPR002615">
    <property type="entry name" value="PSI_PsaJ"/>
</dbReference>
<dbReference type="InterPro" id="IPR036062">
    <property type="entry name" value="PSI_PsaJ_sf"/>
</dbReference>
<dbReference type="PANTHER" id="PTHR36082">
    <property type="match status" value="1"/>
</dbReference>
<dbReference type="PANTHER" id="PTHR36082:SF2">
    <property type="entry name" value="PHOTOSYSTEM I REACTION CENTER SUBUNIT IX"/>
    <property type="match status" value="1"/>
</dbReference>
<dbReference type="Pfam" id="PF01701">
    <property type="entry name" value="PSI_PsaJ"/>
    <property type="match status" value="1"/>
</dbReference>
<dbReference type="SUPFAM" id="SSF81544">
    <property type="entry name" value="Subunit IX of photosystem I reaction centre, PsaJ"/>
    <property type="match status" value="1"/>
</dbReference>
<gene>
    <name evidence="1" type="primary">psaJ</name>
</gene>
<reference key="1">
    <citation type="journal article" date="2006" name="BMC Evol. Biol.">
        <title>Complete plastid genome sequences of Drimys, Liriodendron, and Piper: implications for the phylogenetic relationships of magnoliids.</title>
        <authorList>
            <person name="Cai Z."/>
            <person name="Penaflor C."/>
            <person name="Kuehl J.V."/>
            <person name="Leebens-Mack J."/>
            <person name="Carlson J.E."/>
            <person name="dePamphilis C.W."/>
            <person name="Boore J.L."/>
            <person name="Jansen R.K."/>
        </authorList>
    </citation>
    <scope>NUCLEOTIDE SEQUENCE [LARGE SCALE GENOMIC DNA]</scope>
</reference>
<protein>
    <recommendedName>
        <fullName evidence="1">Photosystem I reaction center subunit IX</fullName>
    </recommendedName>
    <alternativeName>
        <fullName evidence="1">PSI-J</fullName>
    </alternativeName>
</protein>
<name>PSAJ_PIPCE</name>
<feature type="chain" id="PRO_0000276071" description="Photosystem I reaction center subunit IX">
    <location>
        <begin position="1"/>
        <end position="44"/>
    </location>
</feature>
<feature type="transmembrane region" description="Helical" evidence="1">
    <location>
        <begin position="7"/>
        <end position="27"/>
    </location>
</feature>
<geneLocation type="chloroplast"/>
<comment type="function">
    <text evidence="1">May help in the organization of the PsaE and PsaF subunits.</text>
</comment>
<comment type="subcellular location">
    <subcellularLocation>
        <location evidence="1">Plastid</location>
        <location evidence="1">Chloroplast thylakoid membrane</location>
        <topology evidence="1">Single-pass membrane protein</topology>
    </subcellularLocation>
</comment>
<comment type="similarity">
    <text evidence="1">Belongs to the PsaJ family.</text>
</comment>
<organism>
    <name type="scientific">Piper cenocladum</name>
    <name type="common">Ant piper</name>
    <dbReference type="NCBI Taxonomy" id="398741"/>
    <lineage>
        <taxon>Eukaryota</taxon>
        <taxon>Viridiplantae</taxon>
        <taxon>Streptophyta</taxon>
        <taxon>Embryophyta</taxon>
        <taxon>Tracheophyta</taxon>
        <taxon>Spermatophyta</taxon>
        <taxon>Magnoliopsida</taxon>
        <taxon>Magnoliidae</taxon>
        <taxon>Piperales</taxon>
        <taxon>Piperaceae</taxon>
        <taxon>Piper</taxon>
    </lineage>
</organism>
<evidence type="ECO:0000255" key="1">
    <source>
        <dbReference type="HAMAP-Rule" id="MF_00522"/>
    </source>
</evidence>
<proteinExistence type="inferred from homology"/>
<sequence length="44" mass="4991">MRDIKTYLSVAPVLATLWFGSLAGLLIEINRLFPDALVFPFFSF</sequence>
<keyword id="KW-0150">Chloroplast</keyword>
<keyword id="KW-0472">Membrane</keyword>
<keyword id="KW-0602">Photosynthesis</keyword>
<keyword id="KW-0603">Photosystem I</keyword>
<keyword id="KW-0934">Plastid</keyword>
<keyword id="KW-0793">Thylakoid</keyword>
<keyword id="KW-0812">Transmembrane</keyword>
<keyword id="KW-1133">Transmembrane helix</keyword>
<accession>Q06GP0</accession>